<dbReference type="EMBL" id="CP000151">
    <property type="protein sequence ID" value="ABB09959.1"/>
    <property type="molecule type" value="Genomic_DNA"/>
</dbReference>
<dbReference type="RefSeq" id="WP_011353465.1">
    <property type="nucleotide sequence ID" value="NZ_CABVPZ010000078.1"/>
</dbReference>
<dbReference type="SMR" id="Q39C57"/>
<dbReference type="GeneID" id="45096237"/>
<dbReference type="KEGG" id="bur:Bcep18194_A6365"/>
<dbReference type="PATRIC" id="fig|482957.22.peg.3388"/>
<dbReference type="HOGENOM" id="CLU_069313_0_0_4"/>
<dbReference type="Proteomes" id="UP000002705">
    <property type="component" value="Chromosome 1"/>
</dbReference>
<dbReference type="GO" id="GO:0009427">
    <property type="term" value="C:bacterial-type flagellum basal body, distal rod, L ring"/>
    <property type="evidence" value="ECO:0007669"/>
    <property type="project" value="InterPro"/>
</dbReference>
<dbReference type="GO" id="GO:0009279">
    <property type="term" value="C:cell outer membrane"/>
    <property type="evidence" value="ECO:0007669"/>
    <property type="project" value="UniProtKB-SubCell"/>
</dbReference>
<dbReference type="GO" id="GO:0003774">
    <property type="term" value="F:cytoskeletal motor activity"/>
    <property type="evidence" value="ECO:0007669"/>
    <property type="project" value="InterPro"/>
</dbReference>
<dbReference type="GO" id="GO:0071973">
    <property type="term" value="P:bacterial-type flagellum-dependent cell motility"/>
    <property type="evidence" value="ECO:0007669"/>
    <property type="project" value="InterPro"/>
</dbReference>
<dbReference type="HAMAP" id="MF_00415">
    <property type="entry name" value="FlgH"/>
    <property type="match status" value="1"/>
</dbReference>
<dbReference type="InterPro" id="IPR000527">
    <property type="entry name" value="Flag_Lring"/>
</dbReference>
<dbReference type="NCBIfam" id="NF009337">
    <property type="entry name" value="PRK12697.1"/>
    <property type="match status" value="1"/>
</dbReference>
<dbReference type="PANTHER" id="PTHR34933">
    <property type="entry name" value="FLAGELLAR L-RING PROTEIN"/>
    <property type="match status" value="1"/>
</dbReference>
<dbReference type="PANTHER" id="PTHR34933:SF3">
    <property type="entry name" value="FLAGELLAR L-RING PROTEIN"/>
    <property type="match status" value="1"/>
</dbReference>
<dbReference type="Pfam" id="PF02107">
    <property type="entry name" value="FlgH"/>
    <property type="match status" value="1"/>
</dbReference>
<dbReference type="PRINTS" id="PR01008">
    <property type="entry name" value="FLGLRINGFLGH"/>
</dbReference>
<dbReference type="PROSITE" id="PS51257">
    <property type="entry name" value="PROKAR_LIPOPROTEIN"/>
    <property type="match status" value="1"/>
</dbReference>
<sequence length="230" mass="24232">MKQVRLLPSATVRAACAVAVAAFAAGCAQIPRDPIIQQPMTAQPPTPMSMQAPGSIYNPGYAGRPLFEDQRPRNVGDILTIMIAENINATKSSGANTNRQGNTDFNVPTAGFLGGLFAKANLSATGNNKFAATGGASAANTFNGTITVTVTNVLPNGNLVVSGEKQMLINQGNEFVRFSGVVNPNTISGANSVYSTQVADAKIEYSAKGYINEAETMGWLQRFFLNIAPW</sequence>
<accession>Q39C57</accession>
<protein>
    <recommendedName>
        <fullName evidence="1">Flagellar L-ring protein</fullName>
    </recommendedName>
    <alternativeName>
        <fullName evidence="1">Basal body L-ring protein</fullName>
    </alternativeName>
</protein>
<comment type="function">
    <text evidence="1">Assembles around the rod to form the L-ring and probably protects the motor/basal body from shearing forces during rotation.</text>
</comment>
<comment type="subunit">
    <text evidence="1">The basal body constitutes a major portion of the flagellar organelle and consists of four rings (L,P,S, and M) mounted on a central rod.</text>
</comment>
<comment type="subcellular location">
    <subcellularLocation>
        <location evidence="1">Cell outer membrane</location>
        <topology evidence="1">Lipid-anchor</topology>
    </subcellularLocation>
    <subcellularLocation>
        <location evidence="1">Bacterial flagellum basal body</location>
    </subcellularLocation>
</comment>
<comment type="similarity">
    <text evidence="1">Belongs to the FlgH family.</text>
</comment>
<proteinExistence type="inferred from homology"/>
<feature type="signal peptide" evidence="1">
    <location>
        <begin position="1"/>
        <end position="26"/>
    </location>
</feature>
<feature type="chain" id="PRO_0000236817" description="Flagellar L-ring protein">
    <location>
        <begin position="27"/>
        <end position="230"/>
    </location>
</feature>
<feature type="lipid moiety-binding region" description="N-palmitoyl cysteine" evidence="1">
    <location>
        <position position="27"/>
    </location>
</feature>
<feature type="lipid moiety-binding region" description="S-diacylglycerol cysteine" evidence="1">
    <location>
        <position position="27"/>
    </location>
</feature>
<organism>
    <name type="scientific">Burkholderia lata (strain ATCC 17760 / DSM 23089 / LMG 22485 / NCIMB 9086 / R18194 / 383)</name>
    <dbReference type="NCBI Taxonomy" id="482957"/>
    <lineage>
        <taxon>Bacteria</taxon>
        <taxon>Pseudomonadati</taxon>
        <taxon>Pseudomonadota</taxon>
        <taxon>Betaproteobacteria</taxon>
        <taxon>Burkholderiales</taxon>
        <taxon>Burkholderiaceae</taxon>
        <taxon>Burkholderia</taxon>
        <taxon>Burkholderia cepacia complex</taxon>
    </lineage>
</organism>
<keyword id="KW-0975">Bacterial flagellum</keyword>
<keyword id="KW-0998">Cell outer membrane</keyword>
<keyword id="KW-0449">Lipoprotein</keyword>
<keyword id="KW-0472">Membrane</keyword>
<keyword id="KW-0564">Palmitate</keyword>
<keyword id="KW-0732">Signal</keyword>
<evidence type="ECO:0000255" key="1">
    <source>
        <dbReference type="HAMAP-Rule" id="MF_00415"/>
    </source>
</evidence>
<gene>
    <name evidence="1" type="primary">flgH</name>
    <name type="ordered locus">Bcep18194_A6365</name>
</gene>
<reference key="1">
    <citation type="submission" date="2005-10" db="EMBL/GenBank/DDBJ databases">
        <title>Complete sequence of chromosome 1 of Burkholderia sp. 383.</title>
        <authorList>
            <consortium name="US DOE Joint Genome Institute"/>
            <person name="Copeland A."/>
            <person name="Lucas S."/>
            <person name="Lapidus A."/>
            <person name="Barry K."/>
            <person name="Detter J.C."/>
            <person name="Glavina T."/>
            <person name="Hammon N."/>
            <person name="Israni S."/>
            <person name="Pitluck S."/>
            <person name="Chain P."/>
            <person name="Malfatti S."/>
            <person name="Shin M."/>
            <person name="Vergez L."/>
            <person name="Schmutz J."/>
            <person name="Larimer F."/>
            <person name="Land M."/>
            <person name="Kyrpides N."/>
            <person name="Lykidis A."/>
            <person name="Richardson P."/>
        </authorList>
    </citation>
    <scope>NUCLEOTIDE SEQUENCE [LARGE SCALE GENOMIC DNA]</scope>
    <source>
        <strain>ATCC 17760 / DSM 23089 / LMG 22485 / NCIMB 9086 / R18194 / 383</strain>
    </source>
</reference>
<name>FLGH_BURL3</name>